<accession>Q6GAA8</accession>
<dbReference type="EMBL" id="BX571857">
    <property type="protein sequence ID" value="CAG42815.1"/>
    <property type="molecule type" value="Genomic_DNA"/>
</dbReference>
<dbReference type="RefSeq" id="WP_000170601.1">
    <property type="nucleotide sequence ID" value="NC_002953.3"/>
</dbReference>
<dbReference type="SMR" id="Q6GAA8"/>
<dbReference type="KEGG" id="sas:SAS1041"/>
<dbReference type="HOGENOM" id="CLU_096059_0_0_9"/>
<dbReference type="Gene3D" id="3.30.930.20">
    <property type="entry name" value="Protein of unknown function DUF1054"/>
    <property type="match status" value="1"/>
</dbReference>
<dbReference type="HAMAP" id="MF_01851">
    <property type="entry name" value="UPF0637"/>
    <property type="match status" value="1"/>
</dbReference>
<dbReference type="InterPro" id="IPR009403">
    <property type="entry name" value="UPF0637"/>
</dbReference>
<dbReference type="InterPro" id="IPR053707">
    <property type="entry name" value="UPF0637_domain_sf"/>
</dbReference>
<dbReference type="Pfam" id="PF06335">
    <property type="entry name" value="DUF1054"/>
    <property type="match status" value="1"/>
</dbReference>
<dbReference type="PIRSF" id="PIRSF021332">
    <property type="entry name" value="DUF1054"/>
    <property type="match status" value="1"/>
</dbReference>
<dbReference type="SUPFAM" id="SSF142913">
    <property type="entry name" value="YktB/PF0168-like"/>
    <property type="match status" value="1"/>
</dbReference>
<comment type="similarity">
    <text evidence="1">Belongs to the UPF0637 family.</text>
</comment>
<organism>
    <name type="scientific">Staphylococcus aureus (strain MSSA476)</name>
    <dbReference type="NCBI Taxonomy" id="282459"/>
    <lineage>
        <taxon>Bacteria</taxon>
        <taxon>Bacillati</taxon>
        <taxon>Bacillota</taxon>
        <taxon>Bacilli</taxon>
        <taxon>Bacillales</taxon>
        <taxon>Staphylococcaceae</taxon>
        <taxon>Staphylococcus</taxon>
    </lineage>
</organism>
<gene>
    <name type="ordered locus">SAS1041</name>
</gene>
<protein>
    <recommendedName>
        <fullName evidence="1">UPF0637 protein SAS1041</fullName>
    </recommendedName>
</protein>
<name>Y1041_STAAS</name>
<sequence>MTKYTFKPKDFKAFNVEGLDARMEALNEYIRPQLHELGEYFSDFFTSQTGETFYPHVAKHARRSVNPPKDTWVAFATNKRGYKMLPHFQIGMFEDQLFVMFGIMHEAKDKATRAKVFERNFKAIQQLPDDYRVCLDHMKPDKPFIKDLTDDDLKEAIQRAINVKKGEFFIARAITPQDKRLKSDKAFIAFLEETFDQFLPFYSA</sequence>
<reference key="1">
    <citation type="journal article" date="2004" name="Proc. Natl. Acad. Sci. U.S.A.">
        <title>Complete genomes of two clinical Staphylococcus aureus strains: evidence for the rapid evolution of virulence and drug resistance.</title>
        <authorList>
            <person name="Holden M.T.G."/>
            <person name="Feil E.J."/>
            <person name="Lindsay J.A."/>
            <person name="Peacock S.J."/>
            <person name="Day N.P.J."/>
            <person name="Enright M.C."/>
            <person name="Foster T.J."/>
            <person name="Moore C.E."/>
            <person name="Hurst L."/>
            <person name="Atkin R."/>
            <person name="Barron A."/>
            <person name="Bason N."/>
            <person name="Bentley S.D."/>
            <person name="Chillingworth C."/>
            <person name="Chillingworth T."/>
            <person name="Churcher C."/>
            <person name="Clark L."/>
            <person name="Corton C."/>
            <person name="Cronin A."/>
            <person name="Doggett J."/>
            <person name="Dowd L."/>
            <person name="Feltwell T."/>
            <person name="Hance Z."/>
            <person name="Harris B."/>
            <person name="Hauser H."/>
            <person name="Holroyd S."/>
            <person name="Jagels K."/>
            <person name="James K.D."/>
            <person name="Lennard N."/>
            <person name="Line A."/>
            <person name="Mayes R."/>
            <person name="Moule S."/>
            <person name="Mungall K."/>
            <person name="Ormond D."/>
            <person name="Quail M.A."/>
            <person name="Rabbinowitsch E."/>
            <person name="Rutherford K.M."/>
            <person name="Sanders M."/>
            <person name="Sharp S."/>
            <person name="Simmonds M."/>
            <person name="Stevens K."/>
            <person name="Whitehead S."/>
            <person name="Barrell B.G."/>
            <person name="Spratt B.G."/>
            <person name="Parkhill J."/>
        </authorList>
    </citation>
    <scope>NUCLEOTIDE SEQUENCE [LARGE SCALE GENOMIC DNA]</scope>
    <source>
        <strain>MSSA476</strain>
    </source>
</reference>
<feature type="chain" id="PRO_0000348324" description="UPF0637 protein SAS1041">
    <location>
        <begin position="1"/>
        <end position="204"/>
    </location>
</feature>
<proteinExistence type="inferred from homology"/>
<evidence type="ECO:0000255" key="1">
    <source>
        <dbReference type="HAMAP-Rule" id="MF_01851"/>
    </source>
</evidence>